<evidence type="ECO:0000250" key="1"/>
<evidence type="ECO:0000305" key="2"/>
<feature type="chain" id="PRO_0000405674" description="Nucleolar protein SWM2">
    <location>
        <begin position="1"/>
        <end position="129"/>
    </location>
</feature>
<comment type="subcellular location">
    <subcellularLocation>
        <location evidence="1">Nucleus</location>
        <location evidence="1">Nucleolus</location>
    </subcellularLocation>
</comment>
<comment type="similarity">
    <text evidence="2">Belongs to the SWM2 family.</text>
</comment>
<dbReference type="EMBL" id="CU928180">
    <property type="protein sequence ID" value="CAR30592.1"/>
    <property type="molecule type" value="Genomic_DNA"/>
</dbReference>
<dbReference type="RefSeq" id="XP_002556454.1">
    <property type="nucleotide sequence ID" value="XM_002556408.1"/>
</dbReference>
<dbReference type="SMR" id="C5E3I1"/>
<dbReference type="FunCoup" id="C5E3I1">
    <property type="interactions" value="20"/>
</dbReference>
<dbReference type="GeneID" id="8294815"/>
<dbReference type="KEGG" id="lth:KLTH0H13750g"/>
<dbReference type="HOGENOM" id="CLU_2027145_0_0_1"/>
<dbReference type="InParanoid" id="C5E3I1"/>
<dbReference type="OMA" id="NAVRICE"/>
<dbReference type="OrthoDB" id="4033486at2759"/>
<dbReference type="Proteomes" id="UP000002036">
    <property type="component" value="Chromosome H"/>
</dbReference>
<dbReference type="GO" id="GO:0005730">
    <property type="term" value="C:nucleolus"/>
    <property type="evidence" value="ECO:0007669"/>
    <property type="project" value="UniProtKB-SubCell"/>
</dbReference>
<dbReference type="InterPro" id="IPR031391">
    <property type="entry name" value="Swm2"/>
</dbReference>
<dbReference type="Pfam" id="PF17083">
    <property type="entry name" value="Swm2"/>
    <property type="match status" value="1"/>
</dbReference>
<gene>
    <name type="primary">SWM2</name>
    <name type="ordered locus">KLTH0H13750g</name>
</gene>
<proteinExistence type="inferred from homology"/>
<protein>
    <recommendedName>
        <fullName>Nucleolar protein SWM2</fullName>
    </recommendedName>
</protein>
<accession>C5E3I1</accession>
<sequence length="129" mass="14520">MNAAPRDLLRQFLDSFTDIAVIPVRLTPVLSRYYDAIAKDPELSKLALEKCNYVLENLSAHSPEIVTRCSRLYEALTAAKERDAAGNLIVEHINLESVSDMPFLSRDQHMANLIIEEIDVADYIEESPS</sequence>
<reference key="1">
    <citation type="journal article" date="2009" name="Genome Res.">
        <title>Comparative genomics of protoploid Saccharomycetaceae.</title>
        <authorList>
            <consortium name="The Genolevures Consortium"/>
            <person name="Souciet J.-L."/>
            <person name="Dujon B."/>
            <person name="Gaillardin C."/>
            <person name="Johnston M."/>
            <person name="Baret P.V."/>
            <person name="Cliften P."/>
            <person name="Sherman D.J."/>
            <person name="Weissenbach J."/>
            <person name="Westhof E."/>
            <person name="Wincker P."/>
            <person name="Jubin C."/>
            <person name="Poulain J."/>
            <person name="Barbe V."/>
            <person name="Segurens B."/>
            <person name="Artiguenave F."/>
            <person name="Anthouard V."/>
            <person name="Vacherie B."/>
            <person name="Val M.-E."/>
            <person name="Fulton R.S."/>
            <person name="Minx P."/>
            <person name="Wilson R."/>
            <person name="Durrens P."/>
            <person name="Jean G."/>
            <person name="Marck C."/>
            <person name="Martin T."/>
            <person name="Nikolski M."/>
            <person name="Rolland T."/>
            <person name="Seret M.-L."/>
            <person name="Casaregola S."/>
            <person name="Despons L."/>
            <person name="Fairhead C."/>
            <person name="Fischer G."/>
            <person name="Lafontaine I."/>
            <person name="Leh V."/>
            <person name="Lemaire M."/>
            <person name="de Montigny J."/>
            <person name="Neuveglise C."/>
            <person name="Thierry A."/>
            <person name="Blanc-Lenfle I."/>
            <person name="Bleykasten C."/>
            <person name="Diffels J."/>
            <person name="Fritsch E."/>
            <person name="Frangeul L."/>
            <person name="Goeffon A."/>
            <person name="Jauniaux N."/>
            <person name="Kachouri-Lafond R."/>
            <person name="Payen C."/>
            <person name="Potier S."/>
            <person name="Pribylova L."/>
            <person name="Ozanne C."/>
            <person name="Richard G.-F."/>
            <person name="Sacerdot C."/>
            <person name="Straub M.-L."/>
            <person name="Talla E."/>
        </authorList>
    </citation>
    <scope>NUCLEOTIDE SEQUENCE [LARGE SCALE GENOMIC DNA]</scope>
    <source>
        <strain>ATCC 56472 / CBS 6340 / NRRL Y-8284</strain>
    </source>
</reference>
<keyword id="KW-0539">Nucleus</keyword>
<keyword id="KW-1185">Reference proteome</keyword>
<name>SWM2_LACTC</name>
<organism>
    <name type="scientific">Lachancea thermotolerans (strain ATCC 56472 / CBS 6340 / NRRL Y-8284)</name>
    <name type="common">Yeast</name>
    <name type="synonym">Kluyveromyces thermotolerans</name>
    <dbReference type="NCBI Taxonomy" id="559295"/>
    <lineage>
        <taxon>Eukaryota</taxon>
        <taxon>Fungi</taxon>
        <taxon>Dikarya</taxon>
        <taxon>Ascomycota</taxon>
        <taxon>Saccharomycotina</taxon>
        <taxon>Saccharomycetes</taxon>
        <taxon>Saccharomycetales</taxon>
        <taxon>Saccharomycetaceae</taxon>
        <taxon>Lachancea</taxon>
    </lineage>
</organism>